<sequence length="156" mass="17892">MPRRRGIGHRKILSDPKFSSEMVAKLINIIMVDGKKSIAEEIVYQALTMLAKKIGKPELEVLELALENVRPTVEVKSRRVGGSTYQVPIEVRPVRRHALAMRWIVHSARKRIDKSMIIRLSNELSDAIENKGSAVKKREDVHRMAEANKAFAHYRW</sequence>
<accession>Q89A66</accession>
<organism>
    <name type="scientific">Buchnera aphidicola subsp. Baizongia pistaciae (strain Bp)</name>
    <dbReference type="NCBI Taxonomy" id="224915"/>
    <lineage>
        <taxon>Bacteria</taxon>
        <taxon>Pseudomonadati</taxon>
        <taxon>Pseudomonadota</taxon>
        <taxon>Gammaproteobacteria</taxon>
        <taxon>Enterobacterales</taxon>
        <taxon>Erwiniaceae</taxon>
        <taxon>Buchnera</taxon>
    </lineage>
</organism>
<keyword id="KW-1185">Reference proteome</keyword>
<keyword id="KW-0687">Ribonucleoprotein</keyword>
<keyword id="KW-0689">Ribosomal protein</keyword>
<keyword id="KW-0694">RNA-binding</keyword>
<keyword id="KW-0699">rRNA-binding</keyword>
<keyword id="KW-0820">tRNA-binding</keyword>
<gene>
    <name evidence="1" type="primary">rpsG</name>
    <name type="ordered locus">bbp_471</name>
</gene>
<dbReference type="EMBL" id="AE016826">
    <property type="protein sequence ID" value="AAO27177.1"/>
    <property type="molecule type" value="Genomic_DNA"/>
</dbReference>
<dbReference type="RefSeq" id="WP_011091578.1">
    <property type="nucleotide sequence ID" value="NC_004545.1"/>
</dbReference>
<dbReference type="SMR" id="Q89A66"/>
<dbReference type="STRING" id="224915.bbp_471"/>
<dbReference type="KEGG" id="bab:bbp_471"/>
<dbReference type="eggNOG" id="COG0049">
    <property type="taxonomic scope" value="Bacteria"/>
</dbReference>
<dbReference type="HOGENOM" id="CLU_072226_1_1_6"/>
<dbReference type="OrthoDB" id="9807653at2"/>
<dbReference type="Proteomes" id="UP000000601">
    <property type="component" value="Chromosome"/>
</dbReference>
<dbReference type="GO" id="GO:0015935">
    <property type="term" value="C:small ribosomal subunit"/>
    <property type="evidence" value="ECO:0007669"/>
    <property type="project" value="InterPro"/>
</dbReference>
<dbReference type="GO" id="GO:0019843">
    <property type="term" value="F:rRNA binding"/>
    <property type="evidence" value="ECO:0007669"/>
    <property type="project" value="UniProtKB-UniRule"/>
</dbReference>
<dbReference type="GO" id="GO:0003735">
    <property type="term" value="F:structural constituent of ribosome"/>
    <property type="evidence" value="ECO:0007669"/>
    <property type="project" value="InterPro"/>
</dbReference>
<dbReference type="GO" id="GO:0000049">
    <property type="term" value="F:tRNA binding"/>
    <property type="evidence" value="ECO:0007669"/>
    <property type="project" value="UniProtKB-UniRule"/>
</dbReference>
<dbReference type="GO" id="GO:0006412">
    <property type="term" value="P:translation"/>
    <property type="evidence" value="ECO:0007669"/>
    <property type="project" value="UniProtKB-UniRule"/>
</dbReference>
<dbReference type="CDD" id="cd14869">
    <property type="entry name" value="uS7_Bacteria"/>
    <property type="match status" value="1"/>
</dbReference>
<dbReference type="FunFam" id="1.10.455.10:FF:000001">
    <property type="entry name" value="30S ribosomal protein S7"/>
    <property type="match status" value="1"/>
</dbReference>
<dbReference type="Gene3D" id="1.10.455.10">
    <property type="entry name" value="Ribosomal protein S7 domain"/>
    <property type="match status" value="1"/>
</dbReference>
<dbReference type="HAMAP" id="MF_00480_B">
    <property type="entry name" value="Ribosomal_uS7_B"/>
    <property type="match status" value="1"/>
</dbReference>
<dbReference type="InterPro" id="IPR000235">
    <property type="entry name" value="Ribosomal_uS7"/>
</dbReference>
<dbReference type="InterPro" id="IPR005717">
    <property type="entry name" value="Ribosomal_uS7_bac/org-type"/>
</dbReference>
<dbReference type="InterPro" id="IPR020606">
    <property type="entry name" value="Ribosomal_uS7_CS"/>
</dbReference>
<dbReference type="InterPro" id="IPR023798">
    <property type="entry name" value="Ribosomal_uS7_dom"/>
</dbReference>
<dbReference type="InterPro" id="IPR036823">
    <property type="entry name" value="Ribosomal_uS7_dom_sf"/>
</dbReference>
<dbReference type="NCBIfam" id="TIGR01029">
    <property type="entry name" value="rpsG_bact"/>
    <property type="match status" value="1"/>
</dbReference>
<dbReference type="PANTHER" id="PTHR11205">
    <property type="entry name" value="RIBOSOMAL PROTEIN S7"/>
    <property type="match status" value="1"/>
</dbReference>
<dbReference type="Pfam" id="PF00177">
    <property type="entry name" value="Ribosomal_S7"/>
    <property type="match status" value="1"/>
</dbReference>
<dbReference type="PIRSF" id="PIRSF002122">
    <property type="entry name" value="RPS7p_RPS7a_RPS5e_RPS7o"/>
    <property type="match status" value="1"/>
</dbReference>
<dbReference type="SUPFAM" id="SSF47973">
    <property type="entry name" value="Ribosomal protein S7"/>
    <property type="match status" value="1"/>
</dbReference>
<dbReference type="PROSITE" id="PS00052">
    <property type="entry name" value="RIBOSOMAL_S7"/>
    <property type="match status" value="1"/>
</dbReference>
<feature type="chain" id="PRO_0000124235" description="Small ribosomal subunit protein uS7">
    <location>
        <begin position="1"/>
        <end position="156"/>
    </location>
</feature>
<reference key="1">
    <citation type="journal article" date="2003" name="Proc. Natl. Acad. Sci. U.S.A.">
        <title>Reductive genome evolution in Buchnera aphidicola.</title>
        <authorList>
            <person name="van Ham R.C.H.J."/>
            <person name="Kamerbeek J."/>
            <person name="Palacios C."/>
            <person name="Rausell C."/>
            <person name="Abascal F."/>
            <person name="Bastolla U."/>
            <person name="Fernandez J.M."/>
            <person name="Jimenez L."/>
            <person name="Postigo M."/>
            <person name="Silva F.J."/>
            <person name="Tamames J."/>
            <person name="Viguera E."/>
            <person name="Latorre A."/>
            <person name="Valencia A."/>
            <person name="Moran F."/>
            <person name="Moya A."/>
        </authorList>
    </citation>
    <scope>NUCLEOTIDE SEQUENCE [LARGE SCALE GENOMIC DNA]</scope>
    <source>
        <strain>Bp</strain>
    </source>
</reference>
<name>RS7_BUCBP</name>
<proteinExistence type="inferred from homology"/>
<protein>
    <recommendedName>
        <fullName evidence="1">Small ribosomal subunit protein uS7</fullName>
    </recommendedName>
    <alternativeName>
        <fullName evidence="2">30S ribosomal protein S7</fullName>
    </alternativeName>
</protein>
<evidence type="ECO:0000255" key="1">
    <source>
        <dbReference type="HAMAP-Rule" id="MF_00480"/>
    </source>
</evidence>
<evidence type="ECO:0000305" key="2"/>
<comment type="function">
    <text evidence="1">One of the primary rRNA binding proteins, it binds directly to 16S rRNA where it nucleates assembly of the head domain of the 30S subunit. Is located at the subunit interface close to the decoding center, probably blocks exit of the E-site tRNA.</text>
</comment>
<comment type="subunit">
    <text evidence="1">Part of the 30S ribosomal subunit. Contacts proteins S9 and S11.</text>
</comment>
<comment type="similarity">
    <text evidence="1">Belongs to the universal ribosomal protein uS7 family.</text>
</comment>